<organism>
    <name type="scientific">Saccharomyces cerevisiae (strain ATCC 204508 / S288c)</name>
    <name type="common">Baker's yeast</name>
    <dbReference type="NCBI Taxonomy" id="559292"/>
    <lineage>
        <taxon>Eukaryota</taxon>
        <taxon>Fungi</taxon>
        <taxon>Dikarya</taxon>
        <taxon>Ascomycota</taxon>
        <taxon>Saccharomycotina</taxon>
        <taxon>Saccharomycetes</taxon>
        <taxon>Saccharomycetales</taxon>
        <taxon>Saccharomycetaceae</taxon>
        <taxon>Saccharomyces</taxon>
    </lineage>
</organism>
<evidence type="ECO:0000269" key="1">
    <source>
    </source>
</evidence>
<evidence type="ECO:0000269" key="2">
    <source>
    </source>
</evidence>
<evidence type="ECO:0000269" key="3">
    <source>
    </source>
</evidence>
<evidence type="ECO:0000269" key="4">
    <source>
    </source>
</evidence>
<evidence type="ECO:0000269" key="5">
    <source>
    </source>
</evidence>
<evidence type="ECO:0000269" key="6">
    <source ref="10"/>
</evidence>
<evidence type="ECO:0000303" key="7">
    <source>
    </source>
</evidence>
<evidence type="ECO:0000303" key="8">
    <source>
    </source>
</evidence>
<evidence type="ECO:0000305" key="9"/>
<evidence type="ECO:0000305" key="10">
    <source>
    </source>
</evidence>
<evidence type="ECO:0000305" key="11">
    <source>
    </source>
</evidence>
<evidence type="ECO:0007744" key="12">
    <source>
        <dbReference type="PDB" id="1K9Y"/>
    </source>
</evidence>
<evidence type="ECO:0007744" key="13">
    <source>
        <dbReference type="PDB" id="1K9Z"/>
    </source>
</evidence>
<evidence type="ECO:0007744" key="14">
    <source>
        <dbReference type="PDB" id="1KA0"/>
    </source>
</evidence>
<evidence type="ECO:0007744" key="15">
    <source>
        <dbReference type="PDB" id="1KA1"/>
    </source>
</evidence>
<evidence type="ECO:0007744" key="16">
    <source>
        <dbReference type="PDB" id="1QGX"/>
    </source>
</evidence>
<evidence type="ECO:0007829" key="17">
    <source>
        <dbReference type="PDB" id="1K9Z"/>
    </source>
</evidence>
<evidence type="ECO:0007829" key="18">
    <source>
        <dbReference type="PDB" id="1KA1"/>
    </source>
</evidence>
<accession>P32179</accession>
<accession>D6W203</accession>
<accession>Q6RFY5</accession>
<dbReference type="EC" id="3.1.3.7" evidence="1 5"/>
<dbReference type="EMBL" id="X72847">
    <property type="protein sequence ID" value="CAA51361.1"/>
    <property type="molecule type" value="Genomic_DNA"/>
</dbReference>
<dbReference type="EMBL" id="AY500154">
    <property type="protein sequence ID" value="AAR89916.1"/>
    <property type="molecule type" value="Genomic_DNA"/>
</dbReference>
<dbReference type="EMBL" id="Z74806">
    <property type="protein sequence ID" value="CAA99074.1"/>
    <property type="molecule type" value="Genomic_DNA"/>
</dbReference>
<dbReference type="EMBL" id="BK006948">
    <property type="protein sequence ID" value="DAA10719.1"/>
    <property type="molecule type" value="Genomic_DNA"/>
</dbReference>
<dbReference type="PIR" id="S35318">
    <property type="entry name" value="S35318"/>
</dbReference>
<dbReference type="RefSeq" id="NP_014577.1">
    <property type="nucleotide sequence ID" value="NM_001183319.1"/>
</dbReference>
<dbReference type="PDB" id="1K9Y">
    <property type="method" value="X-ray"/>
    <property type="resolution" value="1.90 A"/>
    <property type="chains" value="A=1-357"/>
</dbReference>
<dbReference type="PDB" id="1K9Z">
    <property type="method" value="X-ray"/>
    <property type="resolution" value="1.50 A"/>
    <property type="chains" value="A=1-357"/>
</dbReference>
<dbReference type="PDB" id="1KA0">
    <property type="method" value="X-ray"/>
    <property type="resolution" value="1.80 A"/>
    <property type="chains" value="A=1-357"/>
</dbReference>
<dbReference type="PDB" id="1KA1">
    <property type="method" value="X-ray"/>
    <property type="resolution" value="1.30 A"/>
    <property type="chains" value="A=1-357"/>
</dbReference>
<dbReference type="PDB" id="1QGX">
    <property type="method" value="X-ray"/>
    <property type="resolution" value="1.60 A"/>
    <property type="chains" value="A=1-357"/>
</dbReference>
<dbReference type="PDBsum" id="1K9Y"/>
<dbReference type="PDBsum" id="1K9Z"/>
<dbReference type="PDBsum" id="1KA0"/>
<dbReference type="PDBsum" id="1KA1"/>
<dbReference type="PDBsum" id="1QGX"/>
<dbReference type="SMR" id="P32179"/>
<dbReference type="BioGRID" id="34337">
    <property type="interactions" value="403"/>
</dbReference>
<dbReference type="DIP" id="DIP-4072N"/>
<dbReference type="FunCoup" id="P32179">
    <property type="interactions" value="115"/>
</dbReference>
<dbReference type="IntAct" id="P32179">
    <property type="interactions" value="3"/>
</dbReference>
<dbReference type="MINT" id="P32179"/>
<dbReference type="STRING" id="4932.YOL064C"/>
<dbReference type="iPTMnet" id="P32179"/>
<dbReference type="PaxDb" id="4932-YOL064C"/>
<dbReference type="PeptideAtlas" id="P32179"/>
<dbReference type="EnsemblFungi" id="YOL064C_mRNA">
    <property type="protein sequence ID" value="YOL064C"/>
    <property type="gene ID" value="YOL064C"/>
</dbReference>
<dbReference type="GeneID" id="854090"/>
<dbReference type="KEGG" id="sce:YOL064C"/>
<dbReference type="AGR" id="SGD:S000005425"/>
<dbReference type="SGD" id="S000005425">
    <property type="gene designation" value="MET22"/>
</dbReference>
<dbReference type="VEuPathDB" id="FungiDB:YOL064C"/>
<dbReference type="eggNOG" id="KOG1528">
    <property type="taxonomic scope" value="Eukaryota"/>
</dbReference>
<dbReference type="HOGENOM" id="CLU_033446_2_1_1"/>
<dbReference type="InParanoid" id="P32179"/>
<dbReference type="OMA" id="MSYQQER"/>
<dbReference type="OrthoDB" id="411145at2759"/>
<dbReference type="BioCyc" id="YEAST:YOL064C-MONOMER"/>
<dbReference type="BRENDA" id="3.1.3.7">
    <property type="organism ID" value="984"/>
</dbReference>
<dbReference type="SABIO-RK" id="P32179"/>
<dbReference type="BioGRID-ORCS" id="854090">
    <property type="hits" value="4 hits in 10 CRISPR screens"/>
</dbReference>
<dbReference type="EvolutionaryTrace" id="P32179"/>
<dbReference type="PRO" id="PR:P32179"/>
<dbReference type="Proteomes" id="UP000002311">
    <property type="component" value="Chromosome XV"/>
</dbReference>
<dbReference type="RNAct" id="P32179">
    <property type="molecule type" value="protein"/>
</dbReference>
<dbReference type="GO" id="GO:0005737">
    <property type="term" value="C:cytoplasm"/>
    <property type="evidence" value="ECO:0007669"/>
    <property type="project" value="UniProtKB-SubCell"/>
</dbReference>
<dbReference type="GO" id="GO:0005634">
    <property type="term" value="C:nucleus"/>
    <property type="evidence" value="ECO:0007669"/>
    <property type="project" value="UniProtKB-SubCell"/>
</dbReference>
<dbReference type="GO" id="GO:0008441">
    <property type="term" value="F:3'(2'),5'-bisphosphate nucleotidase activity"/>
    <property type="evidence" value="ECO:0000314"/>
    <property type="project" value="SGD"/>
</dbReference>
<dbReference type="GO" id="GO:0046872">
    <property type="term" value="F:metal ion binding"/>
    <property type="evidence" value="ECO:0007669"/>
    <property type="project" value="UniProtKB-KW"/>
</dbReference>
<dbReference type="GO" id="GO:0042538">
    <property type="term" value="P:hyperosmotic salinity response"/>
    <property type="evidence" value="ECO:0000315"/>
    <property type="project" value="SGD"/>
</dbReference>
<dbReference type="GO" id="GO:0009086">
    <property type="term" value="P:methionine biosynthetic process"/>
    <property type="evidence" value="ECO:0000315"/>
    <property type="project" value="SGD"/>
</dbReference>
<dbReference type="GO" id="GO:0046854">
    <property type="term" value="P:phosphatidylinositol phosphate biosynthetic process"/>
    <property type="evidence" value="ECO:0007669"/>
    <property type="project" value="InterPro"/>
</dbReference>
<dbReference type="GO" id="GO:0000103">
    <property type="term" value="P:sulfate assimilation"/>
    <property type="evidence" value="ECO:0000315"/>
    <property type="project" value="SGD"/>
</dbReference>
<dbReference type="GO" id="GO:0016078">
    <property type="term" value="P:tRNA decay"/>
    <property type="evidence" value="ECO:0000314"/>
    <property type="project" value="SGD"/>
</dbReference>
<dbReference type="CDD" id="cd01517">
    <property type="entry name" value="PAP_phosphatase"/>
    <property type="match status" value="1"/>
</dbReference>
<dbReference type="FunFam" id="3.30.540.10:FF:000015">
    <property type="entry name" value="3',5'-bisphosphate nucleotidase"/>
    <property type="match status" value="1"/>
</dbReference>
<dbReference type="FunFam" id="3.40.190.80:FF:000003">
    <property type="entry name" value="PAP-specific phosphatase HAL2-like"/>
    <property type="match status" value="1"/>
</dbReference>
<dbReference type="Gene3D" id="3.40.190.80">
    <property type="match status" value="1"/>
</dbReference>
<dbReference type="Gene3D" id="3.30.540.10">
    <property type="entry name" value="Fructose-1,6-Bisphosphatase, subunit A, domain 1"/>
    <property type="match status" value="1"/>
</dbReference>
<dbReference type="InterPro" id="IPR006239">
    <property type="entry name" value="DPNP"/>
</dbReference>
<dbReference type="InterPro" id="IPR020583">
    <property type="entry name" value="Inositol_monoP_metal-BS"/>
</dbReference>
<dbReference type="InterPro" id="IPR051090">
    <property type="entry name" value="Inositol_monoP_superfamily"/>
</dbReference>
<dbReference type="InterPro" id="IPR000760">
    <property type="entry name" value="Inositol_monophosphatase-like"/>
</dbReference>
<dbReference type="InterPro" id="IPR020550">
    <property type="entry name" value="Inositol_monophosphatase_CS"/>
</dbReference>
<dbReference type="NCBIfam" id="TIGR01330">
    <property type="entry name" value="bisphos_HAL2"/>
    <property type="match status" value="1"/>
</dbReference>
<dbReference type="PANTHER" id="PTHR43200:SF6">
    <property type="entry name" value="3'(2'),5'-BISPHOSPHATE NUCLEOTIDASE"/>
    <property type="match status" value="1"/>
</dbReference>
<dbReference type="PANTHER" id="PTHR43200">
    <property type="entry name" value="PHOSPHATASE"/>
    <property type="match status" value="1"/>
</dbReference>
<dbReference type="Pfam" id="PF00459">
    <property type="entry name" value="Inositol_P"/>
    <property type="match status" value="1"/>
</dbReference>
<dbReference type="PRINTS" id="PR00377">
    <property type="entry name" value="IMPHPHTASES"/>
</dbReference>
<dbReference type="SUPFAM" id="SSF56655">
    <property type="entry name" value="Carbohydrate phosphatase"/>
    <property type="match status" value="1"/>
</dbReference>
<dbReference type="PROSITE" id="PS00629">
    <property type="entry name" value="IMP_1"/>
    <property type="match status" value="1"/>
</dbReference>
<dbReference type="PROSITE" id="PS00630">
    <property type="entry name" value="IMP_2"/>
    <property type="match status" value="1"/>
</dbReference>
<gene>
    <name type="primary">MET22</name>
    <name evidence="8" type="synonym">HAL2</name>
    <name type="ordered locus">YOL064C</name>
</gene>
<keyword id="KW-0002">3D-structure</keyword>
<keyword id="KW-0963">Cytoplasm</keyword>
<keyword id="KW-0378">Hydrolase</keyword>
<keyword id="KW-0452">Lithium</keyword>
<keyword id="KW-0460">Magnesium</keyword>
<keyword id="KW-0479">Metal-binding</keyword>
<keyword id="KW-0539">Nucleus</keyword>
<keyword id="KW-1185">Reference proteome</keyword>
<keyword id="KW-0346">Stress response</keyword>
<feature type="chain" id="PRO_0000142537" description="3'(2'),5'-bisphosphate nucleotidase">
    <location>
        <begin position="1"/>
        <end position="357"/>
    </location>
</feature>
<feature type="active site" description="Proton acceptor" evidence="10">
    <location>
        <position position="49"/>
    </location>
</feature>
<feature type="active site" description="Proton acceptor" evidence="10">
    <location>
        <position position="147"/>
    </location>
</feature>
<feature type="binding site" evidence="1 2 12 16">
    <location>
        <position position="72"/>
    </location>
    <ligand>
        <name>Mg(2+)</name>
        <dbReference type="ChEBI" id="CHEBI:18420"/>
        <label>1</label>
    </ligand>
</feature>
<feature type="binding site" evidence="1 2 12 16">
    <location>
        <position position="72"/>
    </location>
    <ligand>
        <name>Mg(2+)</name>
        <dbReference type="ChEBI" id="CHEBI:18420"/>
        <label>3</label>
    </ligand>
</feature>
<feature type="binding site" evidence="1 2 12 16">
    <location>
        <position position="142"/>
    </location>
    <ligand>
        <name>Mg(2+)</name>
        <dbReference type="ChEBI" id="CHEBI:18420"/>
        <label>1</label>
    </ligand>
</feature>
<feature type="binding site" evidence="2 12 15">
    <location>
        <position position="142"/>
    </location>
    <ligand>
        <name>Mg(2+)</name>
        <dbReference type="ChEBI" id="CHEBI:18420"/>
        <label>2</label>
    </ligand>
</feature>
<feature type="binding site" evidence="1 2 12 16">
    <location>
        <position position="144"/>
    </location>
    <ligand>
        <name>Mg(2+)</name>
        <dbReference type="ChEBI" id="CHEBI:18420"/>
        <label>1</label>
    </ligand>
</feature>
<feature type="binding site" evidence="2 12 15">
    <location>
        <position position="145"/>
    </location>
    <ligand>
        <name>Mg(2+)</name>
        <dbReference type="ChEBI" id="CHEBI:18420"/>
        <label>2</label>
    </ligand>
</feature>
<feature type="binding site" evidence="2 15">
    <location>
        <position position="147"/>
    </location>
    <ligand>
        <name>adenosine 3',5'-bisphosphate</name>
        <dbReference type="ChEBI" id="CHEBI:58343"/>
    </ligand>
</feature>
<feature type="binding site" evidence="2 15">
    <location>
        <position position="241"/>
    </location>
    <ligand>
        <name>adenosine 3',5'-bisphosphate</name>
        <dbReference type="ChEBI" id="CHEBI:58343"/>
    </ligand>
</feature>
<feature type="binding site" evidence="1 2 6 12 14 16">
    <location>
        <position position="241"/>
    </location>
    <ligand>
        <name>AMP</name>
        <dbReference type="ChEBI" id="CHEBI:456215"/>
    </ligand>
</feature>
<feature type="binding site" evidence="2 15">
    <location>
        <position position="264"/>
    </location>
    <ligand>
        <name>adenosine 3',5'-bisphosphate</name>
        <dbReference type="ChEBI" id="CHEBI:58343"/>
    </ligand>
</feature>
<feature type="binding site" evidence="1 2 6 12 14 16">
    <location>
        <position position="264"/>
    </location>
    <ligand>
        <name>AMP</name>
        <dbReference type="ChEBI" id="CHEBI:456215"/>
    </ligand>
</feature>
<feature type="binding site" evidence="2 15">
    <location>
        <position position="267"/>
    </location>
    <ligand>
        <name>adenosine 3',5'-bisphosphate</name>
        <dbReference type="ChEBI" id="CHEBI:58343"/>
    </ligand>
</feature>
<feature type="binding site" evidence="1 2 6 12 14 16">
    <location>
        <position position="267"/>
    </location>
    <ligand>
        <name>AMP</name>
        <dbReference type="ChEBI" id="CHEBI:456215"/>
    </ligand>
</feature>
<feature type="binding site" evidence="6 15">
    <location>
        <position position="281"/>
    </location>
    <ligand>
        <name>adenosine 3',5'-bisphosphate</name>
        <dbReference type="ChEBI" id="CHEBI:58343"/>
    </ligand>
</feature>
<feature type="binding site" evidence="1 2 6 12 14 16">
    <location>
        <position position="281"/>
    </location>
    <ligand>
        <name>AMP</name>
        <dbReference type="ChEBI" id="CHEBI:456215"/>
    </ligand>
</feature>
<feature type="binding site" evidence="2 15">
    <location>
        <position position="294"/>
    </location>
    <ligand>
        <name>adenosine 3',5'-bisphosphate</name>
        <dbReference type="ChEBI" id="CHEBI:58343"/>
    </ligand>
</feature>
<feature type="binding site" evidence="1 2 6 12 14 16">
    <location>
        <position position="294"/>
    </location>
    <ligand>
        <name>AMP</name>
        <dbReference type="ChEBI" id="CHEBI:456215"/>
    </ligand>
</feature>
<feature type="binding site" evidence="2 12 15">
    <location>
        <position position="294"/>
    </location>
    <ligand>
        <name>Mg(2+)</name>
        <dbReference type="ChEBI" id="CHEBI:18420"/>
        <label>2</label>
    </ligand>
</feature>
<feature type="sequence variant" description="In strain: Montrache.">
    <original>N</original>
    <variation>S</variation>
    <location>
        <position position="40"/>
    </location>
</feature>
<feature type="sequence variant" description="In strain: Montrache.">
    <original>K</original>
    <variation>M</variation>
    <location>
        <position position="61"/>
    </location>
</feature>
<feature type="sequence variant" description="In strain: Montrache.">
    <original>N</original>
    <variation>S</variation>
    <location>
        <position position="63"/>
    </location>
</feature>
<feature type="sequence variant" description="In strain: Montrache.">
    <original>I</original>
    <variation>V</variation>
    <location>
        <position position="308"/>
    </location>
</feature>
<feature type="mutagenesis site" description="Increases levels of lithium and sodium resistance while maintaining a relatively high specific activity. Increases affinity for PAP." evidence="1">
    <original>V</original>
    <variation>A</variation>
    <location>
        <position position="70"/>
    </location>
</feature>
<feature type="mutagenesis site" description="Increases levels of lithium and sodium resistance while maintaining a relatively high specific activity. 5-fold decrease in affinity for PAP." evidence="1">
    <original>E</original>
    <variation>K</variation>
    <location>
        <position position="238"/>
    </location>
</feature>
<feature type="helix" evidence="18">
    <location>
        <begin position="4"/>
        <end position="30"/>
    </location>
</feature>
<feature type="turn" evidence="18">
    <location>
        <begin position="31"/>
        <end position="34"/>
    </location>
</feature>
<feature type="strand" evidence="18">
    <location>
        <begin position="35"/>
        <end position="38"/>
    </location>
</feature>
<feature type="strand" evidence="18">
    <location>
        <begin position="44"/>
        <end position="46"/>
    </location>
</feature>
<feature type="helix" evidence="18">
    <location>
        <begin position="47"/>
        <end position="63"/>
    </location>
</feature>
<feature type="strand" evidence="18">
    <location>
        <begin position="69"/>
        <end position="72"/>
    </location>
</feature>
<feature type="helix" evidence="18">
    <location>
        <begin position="80"/>
        <end position="100"/>
    </location>
</feature>
<feature type="strand" evidence="18">
    <location>
        <begin position="111"/>
        <end position="113"/>
    </location>
</feature>
<feature type="helix" evidence="18">
    <location>
        <begin position="118"/>
        <end position="126"/>
    </location>
</feature>
<feature type="strand" evidence="18">
    <location>
        <begin position="134"/>
        <end position="145"/>
    </location>
</feature>
<feature type="helix" evidence="18">
    <location>
        <begin position="147"/>
        <end position="151"/>
    </location>
</feature>
<feature type="strand" evidence="18">
    <location>
        <begin position="157"/>
        <end position="164"/>
    </location>
</feature>
<feature type="strand" evidence="18">
    <location>
        <begin position="167"/>
        <end position="175"/>
    </location>
</feature>
<feature type="helix" evidence="18">
    <location>
        <begin position="180"/>
        <end position="183"/>
    </location>
</feature>
<feature type="turn" evidence="18">
    <location>
        <begin position="189"/>
        <end position="194"/>
    </location>
</feature>
<feature type="strand" evidence="18">
    <location>
        <begin position="196"/>
        <end position="201"/>
    </location>
</feature>
<feature type="turn" evidence="17">
    <location>
        <begin position="202"/>
        <end position="204"/>
    </location>
</feature>
<feature type="strand" evidence="18">
    <location>
        <begin position="206"/>
        <end position="210"/>
    </location>
</feature>
<feature type="turn" evidence="18">
    <location>
        <begin position="211"/>
        <end position="213"/>
    </location>
</feature>
<feature type="strand" evidence="17">
    <location>
        <begin position="218"/>
        <end position="220"/>
    </location>
</feature>
<feature type="helix" evidence="18">
    <location>
        <begin position="228"/>
        <end position="230"/>
    </location>
</feature>
<feature type="strand" evidence="18">
    <location>
        <begin position="232"/>
        <end position="235"/>
    </location>
</feature>
<feature type="turn" evidence="18">
    <location>
        <begin position="239"/>
        <end position="241"/>
    </location>
</feature>
<feature type="helix" evidence="18">
    <location>
        <begin position="244"/>
        <end position="253"/>
    </location>
</feature>
<feature type="strand" evidence="18">
    <location>
        <begin position="258"/>
        <end position="261"/>
    </location>
</feature>
<feature type="helix" evidence="18">
    <location>
        <begin position="266"/>
        <end position="273"/>
    </location>
</feature>
<feature type="strand" evidence="18">
    <location>
        <begin position="277"/>
        <end position="281"/>
    </location>
</feature>
<feature type="helix" evidence="18">
    <location>
        <begin position="292"/>
        <end position="294"/>
    </location>
</feature>
<feature type="helix" evidence="18">
    <location>
        <begin position="296"/>
        <end position="304"/>
    </location>
</feature>
<feature type="strand" evidence="18">
    <location>
        <begin position="308"/>
        <end position="310"/>
    </location>
</feature>
<feature type="strand" evidence="18">
    <location>
        <begin position="312"/>
        <end position="314"/>
    </location>
</feature>
<feature type="strand" evidence="18">
    <location>
        <begin position="322"/>
        <end position="325"/>
    </location>
</feature>
<feature type="strand" evidence="18">
    <location>
        <begin position="327"/>
        <end position="329"/>
    </location>
</feature>
<feature type="strand" evidence="18">
    <location>
        <begin position="331"/>
        <end position="335"/>
    </location>
</feature>
<feature type="helix" evidence="18">
    <location>
        <begin position="338"/>
        <end position="353"/>
    </location>
</feature>
<reference key="1">
    <citation type="journal article" date="1993" name="EMBO J.">
        <title>Salt tolerance and methionine biosynthesis in Saccharomyces cerevisiae involve a putative phosphatase gene.</title>
        <authorList>
            <person name="Glaeser H.-U."/>
            <person name="Thomas D."/>
            <person name="Gaxiola R."/>
            <person name="Montrichard F."/>
            <person name="Surdin-Kerjan Y."/>
            <person name="Serrano R."/>
        </authorList>
    </citation>
    <scope>NUCLEOTIDE SEQUENCE [GENOMIC DNA]</scope>
</reference>
<reference key="2">
    <citation type="submission" date="2003-12" db="EMBL/GenBank/DDBJ databases">
        <title>Cloning of HAL2 gene from Saccharomyces cerevisiae Montrache.</title>
        <authorList>
            <person name="Thanananta N."/>
            <person name="Apisitwanich S."/>
            <person name="Peyachoknagul S."/>
        </authorList>
    </citation>
    <scope>NUCLEOTIDE SEQUENCE [GENOMIC DNA]</scope>
    <source>
        <strain>Montrache</strain>
    </source>
</reference>
<reference key="3">
    <citation type="journal article" date="1997" name="Yeast">
        <title>Sequence analysis of a 33.2 kb segment from the left arm of yeast chromosome XV reveals eight known genes and ten new open reading frames including homologues of ABC transporters, inositol phosphatases and human expressed sequence tags.</title>
        <authorList>
            <person name="Tzermia M."/>
            <person name="Katsoulou C."/>
            <person name="Alexandraki D."/>
        </authorList>
    </citation>
    <scope>NUCLEOTIDE SEQUENCE [GENOMIC DNA]</scope>
</reference>
<reference key="4">
    <citation type="journal article" date="1997" name="Nature">
        <title>The nucleotide sequence of Saccharomyces cerevisiae chromosome XV.</title>
        <authorList>
            <person name="Dujon B."/>
            <person name="Albermann K."/>
            <person name="Aldea M."/>
            <person name="Alexandraki D."/>
            <person name="Ansorge W."/>
            <person name="Arino J."/>
            <person name="Benes V."/>
            <person name="Bohn C."/>
            <person name="Bolotin-Fukuhara M."/>
            <person name="Bordonne R."/>
            <person name="Boyer J."/>
            <person name="Camasses A."/>
            <person name="Casamayor A."/>
            <person name="Casas C."/>
            <person name="Cheret G."/>
            <person name="Cziepluch C."/>
            <person name="Daignan-Fornier B."/>
            <person name="Dang V.-D."/>
            <person name="de Haan M."/>
            <person name="Delius H."/>
            <person name="Durand P."/>
            <person name="Fairhead C."/>
            <person name="Feldmann H."/>
            <person name="Gaillon L."/>
            <person name="Galisson F."/>
            <person name="Gamo F.-J."/>
            <person name="Gancedo C."/>
            <person name="Goffeau A."/>
            <person name="Goulding S.E."/>
            <person name="Grivell L.A."/>
            <person name="Habbig B."/>
            <person name="Hand N.J."/>
            <person name="Hani J."/>
            <person name="Hattenhorst U."/>
            <person name="Hebling U."/>
            <person name="Hernando Y."/>
            <person name="Herrero E."/>
            <person name="Heumann K."/>
            <person name="Hiesel R."/>
            <person name="Hilger F."/>
            <person name="Hofmann B."/>
            <person name="Hollenberg C.P."/>
            <person name="Hughes B."/>
            <person name="Jauniaux J.-C."/>
            <person name="Kalogeropoulos A."/>
            <person name="Katsoulou C."/>
            <person name="Kordes E."/>
            <person name="Lafuente M.J."/>
            <person name="Landt O."/>
            <person name="Louis E.J."/>
            <person name="Maarse A.C."/>
            <person name="Madania A."/>
            <person name="Mannhaupt G."/>
            <person name="Marck C."/>
            <person name="Martin R.P."/>
            <person name="Mewes H.-W."/>
            <person name="Michaux G."/>
            <person name="Paces V."/>
            <person name="Parle-McDermott A.G."/>
            <person name="Pearson B.M."/>
            <person name="Perrin A."/>
            <person name="Pettersson B."/>
            <person name="Poch O."/>
            <person name="Pohl T.M."/>
            <person name="Poirey R."/>
            <person name="Portetelle D."/>
            <person name="Pujol A."/>
            <person name="Purnelle B."/>
            <person name="Ramezani Rad M."/>
            <person name="Rechmann S."/>
            <person name="Schwager C."/>
            <person name="Schweizer M."/>
            <person name="Sor F."/>
            <person name="Sterky F."/>
            <person name="Tarassov I.A."/>
            <person name="Teodoru C."/>
            <person name="Tettelin H."/>
            <person name="Thierry A."/>
            <person name="Tobiasch E."/>
            <person name="Tzermia M."/>
            <person name="Uhlen M."/>
            <person name="Unseld M."/>
            <person name="Valens M."/>
            <person name="Vandenbol M."/>
            <person name="Vetter I."/>
            <person name="Vlcek C."/>
            <person name="Voet M."/>
            <person name="Volckaert G."/>
            <person name="Voss H."/>
            <person name="Wambutt R."/>
            <person name="Wedler H."/>
            <person name="Wiemann S."/>
            <person name="Winsor B."/>
            <person name="Wolfe K.H."/>
            <person name="Zollner A."/>
            <person name="Zumstein E."/>
            <person name="Kleine K."/>
        </authorList>
    </citation>
    <scope>NUCLEOTIDE SEQUENCE [LARGE SCALE GENOMIC DNA]</scope>
    <source>
        <strain>ATCC 204508 / S288c</strain>
    </source>
</reference>
<reference key="5">
    <citation type="journal article" date="2014" name="G3 (Bethesda)">
        <title>The reference genome sequence of Saccharomyces cerevisiae: Then and now.</title>
        <authorList>
            <person name="Engel S.R."/>
            <person name="Dietrich F.S."/>
            <person name="Fisk D.G."/>
            <person name="Binkley G."/>
            <person name="Balakrishnan R."/>
            <person name="Costanzo M.C."/>
            <person name="Dwight S.S."/>
            <person name="Hitz B.C."/>
            <person name="Karra K."/>
            <person name="Nash R.S."/>
            <person name="Weng S."/>
            <person name="Wong E.D."/>
            <person name="Lloyd P."/>
            <person name="Skrzypek M.S."/>
            <person name="Miyasato S.R."/>
            <person name="Simison M."/>
            <person name="Cherry J.M."/>
        </authorList>
    </citation>
    <scope>GENOME REANNOTATION</scope>
    <source>
        <strain>ATCC 204508 / S288c</strain>
    </source>
</reference>
<reference key="6">
    <citation type="journal article" date="2003" name="Nature">
        <title>Global analysis of protein localization in budding yeast.</title>
        <authorList>
            <person name="Huh W.-K."/>
            <person name="Falvo J.V."/>
            <person name="Gerke L.C."/>
            <person name="Carroll A.S."/>
            <person name="Howson R.W."/>
            <person name="Weissman J.S."/>
            <person name="O'Shea E.K."/>
        </authorList>
    </citation>
    <scope>SUBCELLULAR LOCATION [LARGE SCALE ANALYSIS]</scope>
</reference>
<reference key="7">
    <citation type="journal article" date="2003" name="Nature">
        <title>Global analysis of protein expression in yeast.</title>
        <authorList>
            <person name="Ghaemmaghami S."/>
            <person name="Huh W.-K."/>
            <person name="Bower K."/>
            <person name="Howson R.W."/>
            <person name="Belle A."/>
            <person name="Dephoure N."/>
            <person name="O'Shea E.K."/>
            <person name="Weissman J.S."/>
        </authorList>
    </citation>
    <scope>LEVEL OF PROTEIN EXPRESSION [LARGE SCALE ANALYSIS]</scope>
</reference>
<reference key="8">
    <citation type="journal article" date="1995" name="Science">
        <title>A salt-sensitive 3'(2'),5'-bisphosphate nucleotidase involved in sulfate activation.</title>
        <authorList>
            <person name="Murguia J.R."/>
            <person name="Belles J.M."/>
            <person name="Serrano R."/>
        </authorList>
    </citation>
    <scope>FUNCTION</scope>
    <scope>CATALYTIC ACTIVITY</scope>
    <scope>SUBSTRATE SPECIFICITY</scope>
    <scope>COFACTOR</scope>
    <scope>ACTIVITY REGULATION</scope>
</reference>
<reference evidence="16" key="9">
    <citation type="journal article" date="2000" name="J. Mol. Biol.">
        <title>X-ray structure of yeast Hal2p, a major target of lithium and sodium toxicity, and identification of framework interactions determining cation sensitivity.</title>
        <authorList>
            <person name="Albert A."/>
            <person name="Yenush L."/>
            <person name="Gil-Mascarell M.R."/>
            <person name="Rodriguez P.L."/>
            <person name="Patel S."/>
            <person name="Martinez-Ripoll M."/>
            <person name="Blundell T.L."/>
            <person name="Serrano R."/>
        </authorList>
    </citation>
    <scope>X-RAY CRYSTALLOGRAPHY (1.6 ANGSTROMS) IN COMPLEX WITH MAGNESIUM IONS AND AMP</scope>
    <scope>CATALYTIC ACTIVITY</scope>
    <scope>BIOPHYSICOCHEMICAL PROPERTIES</scope>
    <scope>MUTAGENESIS OF VAL-70 AND GLU-238</scope>
</reference>
<reference evidence="13 14" key="10">
    <citation type="submission" date="2001-10" db="PDB data bank">
        <title>Hal2p: Ion selectivity and implications on inhibition mechanism.</title>
        <authorList>
            <person name="Patel S."/>
            <person name="Albert A."/>
            <person name="Blundell T.L."/>
        </authorList>
    </citation>
    <scope>X-RAY CRYSTALLOGRAPHY (1.50 ANGSTROMS) IN COMPLEXES WITH AMP AND ZN(2+)</scope>
</reference>
<reference evidence="12 15" key="11">
    <citation type="journal article" date="2002" name="J. Mol. Biol.">
        <title>Structural enzymology of Li(+)-sensitive/Mg(2+)-dependent phosphatases.</title>
        <authorList>
            <person name="Patel S."/>
            <person name="Martinez-Ripoll M."/>
            <person name="Blundell T.L."/>
            <person name="Albert A."/>
        </authorList>
    </citation>
    <scope>X-RAY CRYSTALLOGRAPHY (1.30 ANGSTROMS) IN COMPLEXES WITH AMP; ADENOSINE 3',5'-BISPHOSPHATE; PHOSPHATE AND MAGNESIUM</scope>
    <scope>COFACTOR</scope>
    <scope>REACTION MECHANISM</scope>
    <scope>ACTIVE SITE</scope>
</reference>
<protein>
    <recommendedName>
        <fullName evidence="8">3'(2'),5'-bisphosphate nucleotidase</fullName>
        <ecNumber evidence="1 5">3.1.3.7</ecNumber>
    </recommendedName>
    <alternativeName>
        <fullName>3'(2'),5-bisphosphonucleoside 3'(2')-phosphohydrolase</fullName>
    </alternativeName>
    <alternativeName>
        <fullName evidence="9">3'-phosphoadenosine-5'-phosphate phosphatase</fullName>
        <shortName evidence="7">3'-phosphoadenosine-5'-phosphatase</shortName>
        <shortName evidence="9">PAP phosphatase</shortName>
        <shortName evidence="7">PAPase</shortName>
    </alternativeName>
    <alternativeName>
        <fullName>DPNPase</fullName>
    </alternativeName>
    <alternativeName>
        <fullName>Halotolerance protein HAL2</fullName>
    </alternativeName>
    <alternativeName>
        <fullName>Methionine-requiring protein 22</fullName>
    </alternativeName>
</protein>
<proteinExistence type="evidence at protein level"/>
<sequence>MALERELLVATQAVRKASLLTKRIQSEVISHKDSTTITKNDNSPVTTGDYAAQTIIINAIKSNFPDDKVVGEESSSGLSDAFVSGILNEIKANDEVYNKNYKKDDFLFTNDQFPLKSLEDVRQIIDFGNYEGGRKGRFWCLDPIDGTKGFLRGEQFAVCLALIVDGVVQLGCIGCPNLVLSSYGAQDLKGHESFGYIFRAVRGLGAFYSPSSDAESWTKIHVRHLKDTKDMITLEGVEKGHSSHDEQTAIKNKLNISKSLHLDSQAKYCLLALGLADVYLRLPIKLSYQEKIWDHAAGNVIVHEAGGIHTDAMEDVPLDFGNGRTLATKGVIASSGPRELHDLVVSTSCDVIQSRNA</sequence>
<comment type="function">
    <text evidence="5">Phosphatase that converts adenosine 3'-phosphate 5'-phosphosulfate (PAPS) to adenosine 5'-phosphosulfate (APS) and 3'(2')-phosphoadenosine 5'-phosphate (PAP) to AMP. May regulate the flux of sulfur in the sulfur-activation pathway by converting PAPS to APS (PubMed:7809627). Involved in salt tolerance. Confers resistance to lithium. Shows no activity on inositol mono- and diphosphates, 3'-AMP, AMP, nicotinamide adenine dinucleotide phosphate (NADP), and p-nitrophenylphosphate (PubMed:7809627).</text>
</comment>
<comment type="catalytic activity">
    <reaction evidence="5">
        <text>3'-phosphoadenylyl sulfate + H2O = adenosine 5'-phosphosulfate + phosphate</text>
        <dbReference type="Rhea" id="RHEA:77639"/>
        <dbReference type="ChEBI" id="CHEBI:15377"/>
        <dbReference type="ChEBI" id="CHEBI:43474"/>
        <dbReference type="ChEBI" id="CHEBI:58243"/>
        <dbReference type="ChEBI" id="CHEBI:58339"/>
        <dbReference type="EC" id="3.1.3.7"/>
    </reaction>
    <physiologicalReaction direction="left-to-right" evidence="11">
        <dbReference type="Rhea" id="RHEA:77640"/>
    </physiologicalReaction>
</comment>
<comment type="catalytic activity">
    <reaction evidence="1 5">
        <text>adenosine 3',5'-bisphosphate + H2O = AMP + phosphate</text>
        <dbReference type="Rhea" id="RHEA:10040"/>
        <dbReference type="ChEBI" id="CHEBI:15377"/>
        <dbReference type="ChEBI" id="CHEBI:43474"/>
        <dbReference type="ChEBI" id="CHEBI:58343"/>
        <dbReference type="ChEBI" id="CHEBI:456215"/>
        <dbReference type="EC" id="3.1.3.7"/>
    </reaction>
    <physiologicalReaction direction="left-to-right" evidence="11">
        <dbReference type="Rhea" id="RHEA:10041"/>
    </physiologicalReaction>
</comment>
<comment type="catalytic activity">
    <reaction evidence="5">
        <text>adenosine 2',5'-bisphosphate + H2O = AMP + phosphate</text>
        <dbReference type="Rhea" id="RHEA:77643"/>
        <dbReference type="ChEBI" id="CHEBI:15377"/>
        <dbReference type="ChEBI" id="CHEBI:43474"/>
        <dbReference type="ChEBI" id="CHEBI:194156"/>
        <dbReference type="ChEBI" id="CHEBI:456215"/>
        <dbReference type="EC" id="3.1.3.7"/>
    </reaction>
    <physiologicalReaction direction="left-to-right" evidence="11">
        <dbReference type="Rhea" id="RHEA:77644"/>
    </physiologicalReaction>
</comment>
<comment type="cofactor">
    <cofactor evidence="5">
        <name>Mg(2+)</name>
        <dbReference type="ChEBI" id="CHEBI:18420"/>
    </cofactor>
    <text evidence="2">Binds 3 Mg(2+) ions per subunit.</text>
</comment>
<comment type="activity regulation">
    <text evidence="1 5">Phosphatase activity is very sensitive to lithium and moderately sensitive to sodium. The inhibitory effects of lithium and sodium are overcome by high concentrations of potassium (PubMed:7809627). Lithium exerts its inhibitory action by blocking the products of the PAP hydrolysis at the active site (PubMed:10656801).</text>
</comment>
<comment type="biophysicochemical properties">
    <kinetics>
        <KM evidence="1">4 uM for adenosine 3',5'-bisphosphate</KM>
    </kinetics>
</comment>
<comment type="subcellular location">
    <subcellularLocation>
        <location evidence="3">Cytoplasm</location>
    </subcellularLocation>
    <subcellularLocation>
        <location evidence="3">Nucleus</location>
    </subcellularLocation>
</comment>
<comment type="induction">
    <text>By salt stress.</text>
</comment>
<comment type="miscellaneous">
    <text evidence="4">Present with 7330 molecules/cell in log phase SD medium.</text>
</comment>
<comment type="similarity">
    <text evidence="9">Belongs to the inositol monophosphatase superfamily.</text>
</comment>
<name>MET22_YEAST</name>